<name>YBEY_LACDB</name>
<keyword id="KW-0963">Cytoplasm</keyword>
<keyword id="KW-0255">Endonuclease</keyword>
<keyword id="KW-0378">Hydrolase</keyword>
<keyword id="KW-0479">Metal-binding</keyword>
<keyword id="KW-0540">Nuclease</keyword>
<keyword id="KW-0690">Ribosome biogenesis</keyword>
<keyword id="KW-0698">rRNA processing</keyword>
<keyword id="KW-0862">Zinc</keyword>
<gene>
    <name evidence="1" type="primary">ybeY</name>
    <name type="ordered locus">LBUL_1171</name>
</gene>
<accession>Q04A18</accession>
<proteinExistence type="inferred from homology"/>
<evidence type="ECO:0000255" key="1">
    <source>
        <dbReference type="HAMAP-Rule" id="MF_00009"/>
    </source>
</evidence>
<dbReference type="EC" id="3.1.-.-" evidence="1"/>
<dbReference type="EMBL" id="CP000412">
    <property type="protein sequence ID" value="ABJ58704.1"/>
    <property type="molecule type" value="Genomic_DNA"/>
</dbReference>
<dbReference type="RefSeq" id="WP_002880169.1">
    <property type="nucleotide sequence ID" value="NC_008529.1"/>
</dbReference>
<dbReference type="SMR" id="Q04A18"/>
<dbReference type="GeneID" id="69669102"/>
<dbReference type="KEGG" id="lbu:LBUL_1171"/>
<dbReference type="HOGENOM" id="CLU_106710_3_0_9"/>
<dbReference type="BioCyc" id="LDEL321956:LBUL_RS05480-MONOMER"/>
<dbReference type="GO" id="GO:0005737">
    <property type="term" value="C:cytoplasm"/>
    <property type="evidence" value="ECO:0007669"/>
    <property type="project" value="UniProtKB-SubCell"/>
</dbReference>
<dbReference type="GO" id="GO:0004222">
    <property type="term" value="F:metalloendopeptidase activity"/>
    <property type="evidence" value="ECO:0007669"/>
    <property type="project" value="InterPro"/>
</dbReference>
<dbReference type="GO" id="GO:0004521">
    <property type="term" value="F:RNA endonuclease activity"/>
    <property type="evidence" value="ECO:0007669"/>
    <property type="project" value="UniProtKB-UniRule"/>
</dbReference>
<dbReference type="GO" id="GO:0008270">
    <property type="term" value="F:zinc ion binding"/>
    <property type="evidence" value="ECO:0007669"/>
    <property type="project" value="UniProtKB-UniRule"/>
</dbReference>
<dbReference type="GO" id="GO:0006364">
    <property type="term" value="P:rRNA processing"/>
    <property type="evidence" value="ECO:0007669"/>
    <property type="project" value="UniProtKB-UniRule"/>
</dbReference>
<dbReference type="Gene3D" id="3.40.390.30">
    <property type="entry name" value="Metalloproteases ('zincins'), catalytic domain"/>
    <property type="match status" value="1"/>
</dbReference>
<dbReference type="HAMAP" id="MF_00009">
    <property type="entry name" value="Endoribonucl_YbeY"/>
    <property type="match status" value="1"/>
</dbReference>
<dbReference type="InterPro" id="IPR023091">
    <property type="entry name" value="MetalPrtase_cat_dom_sf_prd"/>
</dbReference>
<dbReference type="InterPro" id="IPR002036">
    <property type="entry name" value="YbeY"/>
</dbReference>
<dbReference type="NCBIfam" id="TIGR00043">
    <property type="entry name" value="rRNA maturation RNase YbeY"/>
    <property type="match status" value="1"/>
</dbReference>
<dbReference type="PANTHER" id="PTHR46986">
    <property type="entry name" value="ENDORIBONUCLEASE YBEY, CHLOROPLASTIC"/>
    <property type="match status" value="1"/>
</dbReference>
<dbReference type="PANTHER" id="PTHR46986:SF1">
    <property type="entry name" value="ENDORIBONUCLEASE YBEY, CHLOROPLASTIC"/>
    <property type="match status" value="1"/>
</dbReference>
<dbReference type="Pfam" id="PF02130">
    <property type="entry name" value="YbeY"/>
    <property type="match status" value="1"/>
</dbReference>
<dbReference type="SUPFAM" id="SSF55486">
    <property type="entry name" value="Metalloproteases ('zincins'), catalytic domain"/>
    <property type="match status" value="1"/>
</dbReference>
<feature type="chain" id="PRO_0000284226" description="Endoribonuclease YbeY">
    <location>
        <begin position="1"/>
        <end position="174"/>
    </location>
</feature>
<feature type="binding site" evidence="1">
    <location>
        <position position="129"/>
    </location>
    <ligand>
        <name>Zn(2+)</name>
        <dbReference type="ChEBI" id="CHEBI:29105"/>
        <note>catalytic</note>
    </ligand>
</feature>
<feature type="binding site" evidence="1">
    <location>
        <position position="133"/>
    </location>
    <ligand>
        <name>Zn(2+)</name>
        <dbReference type="ChEBI" id="CHEBI:29105"/>
        <note>catalytic</note>
    </ligand>
</feature>
<feature type="binding site" evidence="1">
    <location>
        <position position="139"/>
    </location>
    <ligand>
        <name>Zn(2+)</name>
        <dbReference type="ChEBI" id="CHEBI:29105"/>
        <note>catalytic</note>
    </ligand>
</feature>
<sequence>MQGIDVSYSDEVGFLTKGDRDWEDWIMQLLLMAKKEIGKDNAQEMSINFVDEDRSQAINRDYRDKDRPTDVISFAIEDGDDGLDLAMFTQDPDFTEDIGDLFMCPSVIERHSKEYGTGFDREFGYTIVHGYLHLNCYDHIEPDEAKEMFGIQGKVLEEYGLPLYPDQLDEGRGK</sequence>
<organism>
    <name type="scientific">Lactobacillus delbrueckii subsp. bulgaricus (strain ATCC BAA-365 / Lb-18)</name>
    <dbReference type="NCBI Taxonomy" id="321956"/>
    <lineage>
        <taxon>Bacteria</taxon>
        <taxon>Bacillati</taxon>
        <taxon>Bacillota</taxon>
        <taxon>Bacilli</taxon>
        <taxon>Lactobacillales</taxon>
        <taxon>Lactobacillaceae</taxon>
        <taxon>Lactobacillus</taxon>
    </lineage>
</organism>
<reference key="1">
    <citation type="journal article" date="2006" name="Proc. Natl. Acad. Sci. U.S.A.">
        <title>Comparative genomics of the lactic acid bacteria.</title>
        <authorList>
            <person name="Makarova K.S."/>
            <person name="Slesarev A."/>
            <person name="Wolf Y.I."/>
            <person name="Sorokin A."/>
            <person name="Mirkin B."/>
            <person name="Koonin E.V."/>
            <person name="Pavlov A."/>
            <person name="Pavlova N."/>
            <person name="Karamychev V."/>
            <person name="Polouchine N."/>
            <person name="Shakhova V."/>
            <person name="Grigoriev I."/>
            <person name="Lou Y."/>
            <person name="Rohksar D."/>
            <person name="Lucas S."/>
            <person name="Huang K."/>
            <person name="Goodstein D.M."/>
            <person name="Hawkins T."/>
            <person name="Plengvidhya V."/>
            <person name="Welker D."/>
            <person name="Hughes J."/>
            <person name="Goh Y."/>
            <person name="Benson A."/>
            <person name="Baldwin K."/>
            <person name="Lee J.-H."/>
            <person name="Diaz-Muniz I."/>
            <person name="Dosti B."/>
            <person name="Smeianov V."/>
            <person name="Wechter W."/>
            <person name="Barabote R."/>
            <person name="Lorca G."/>
            <person name="Altermann E."/>
            <person name="Barrangou R."/>
            <person name="Ganesan B."/>
            <person name="Xie Y."/>
            <person name="Rawsthorne H."/>
            <person name="Tamir D."/>
            <person name="Parker C."/>
            <person name="Breidt F."/>
            <person name="Broadbent J.R."/>
            <person name="Hutkins R."/>
            <person name="O'Sullivan D."/>
            <person name="Steele J."/>
            <person name="Unlu G."/>
            <person name="Saier M.H. Jr."/>
            <person name="Klaenhammer T."/>
            <person name="Richardson P."/>
            <person name="Kozyavkin S."/>
            <person name="Weimer B.C."/>
            <person name="Mills D.A."/>
        </authorList>
    </citation>
    <scope>NUCLEOTIDE SEQUENCE [LARGE SCALE GENOMIC DNA]</scope>
    <source>
        <strain>ATCC BAA-365 / Lb-18</strain>
    </source>
</reference>
<comment type="function">
    <text evidence="1">Single strand-specific metallo-endoribonuclease involved in late-stage 70S ribosome quality control and in maturation of the 3' terminus of the 16S rRNA.</text>
</comment>
<comment type="cofactor">
    <cofactor evidence="1">
        <name>Zn(2+)</name>
        <dbReference type="ChEBI" id="CHEBI:29105"/>
    </cofactor>
    <text evidence="1">Binds 1 zinc ion.</text>
</comment>
<comment type="subcellular location">
    <subcellularLocation>
        <location evidence="1">Cytoplasm</location>
    </subcellularLocation>
</comment>
<comment type="similarity">
    <text evidence="1">Belongs to the endoribonuclease YbeY family.</text>
</comment>
<protein>
    <recommendedName>
        <fullName evidence="1">Endoribonuclease YbeY</fullName>
        <ecNumber evidence="1">3.1.-.-</ecNumber>
    </recommendedName>
</protein>